<feature type="chain" id="PRO_0000357907" description="NADH-quinone oxidoreductase subunit D">
    <location>
        <begin position="1"/>
        <end position="401"/>
    </location>
</feature>
<name>NUOD_RHOP2</name>
<gene>
    <name evidence="1" type="primary">nuoD</name>
    <name type="ordered locus">RPB_2575</name>
</gene>
<proteinExistence type="inferred from homology"/>
<sequence length="401" mass="45383">MADAATEAAGLRNFTINFGPQHPAAHGVLRLVLELDGEVVERVDPHIGLLHRGTEKLIEQKTYLQAIPYFDRLDYVAPMNQEHAFCLAAEKLLGIEAPRRAQLIRVLYCEIGRILSHLLNVTTQAMDVGALTPPLWGFEEREKLMMFYERASGSRMHAAYFRIGGVHQDLPPKLIDDIDNWCDNFIQTVDDLETLLTDNRIFKQRNVDIGVVTLEQAWEWGFSGVMVRGSGAAWDLRKSQPYECYAEMDFDVPIGKNGDCYDRYCIRVEEMRQSVRIMKQCIAKMREPAGQGRVAVDDNKIFPPRRGEMKRSMESLIHHFKLYTEGFRVPAGEVYVAVEAPKGEFGVYLVSDGTNKPYKCKVRAPGFAHLQAMDFICRGHLLADVSAILGSLDIVFGEVDR</sequence>
<accession>Q2IWY2</accession>
<evidence type="ECO:0000255" key="1">
    <source>
        <dbReference type="HAMAP-Rule" id="MF_01358"/>
    </source>
</evidence>
<organism>
    <name type="scientific">Rhodopseudomonas palustris (strain HaA2)</name>
    <dbReference type="NCBI Taxonomy" id="316058"/>
    <lineage>
        <taxon>Bacteria</taxon>
        <taxon>Pseudomonadati</taxon>
        <taxon>Pseudomonadota</taxon>
        <taxon>Alphaproteobacteria</taxon>
        <taxon>Hyphomicrobiales</taxon>
        <taxon>Nitrobacteraceae</taxon>
        <taxon>Rhodopseudomonas</taxon>
    </lineage>
</organism>
<protein>
    <recommendedName>
        <fullName evidence="1">NADH-quinone oxidoreductase subunit D</fullName>
        <ecNumber evidence="1">7.1.1.-</ecNumber>
    </recommendedName>
    <alternativeName>
        <fullName evidence="1">NADH dehydrogenase I subunit D</fullName>
    </alternativeName>
    <alternativeName>
        <fullName evidence="1">NDH-1 subunit D</fullName>
    </alternativeName>
</protein>
<dbReference type="EC" id="7.1.1.-" evidence="1"/>
<dbReference type="EMBL" id="CP000250">
    <property type="protein sequence ID" value="ABD07278.1"/>
    <property type="molecule type" value="Genomic_DNA"/>
</dbReference>
<dbReference type="RefSeq" id="WP_011441463.1">
    <property type="nucleotide sequence ID" value="NC_007778.1"/>
</dbReference>
<dbReference type="SMR" id="Q2IWY2"/>
<dbReference type="STRING" id="316058.RPB_2575"/>
<dbReference type="KEGG" id="rpb:RPB_2575"/>
<dbReference type="eggNOG" id="COG0649">
    <property type="taxonomic scope" value="Bacteria"/>
</dbReference>
<dbReference type="HOGENOM" id="CLU_015134_1_1_5"/>
<dbReference type="OrthoDB" id="9801496at2"/>
<dbReference type="Proteomes" id="UP000008809">
    <property type="component" value="Chromosome"/>
</dbReference>
<dbReference type="GO" id="GO:0005886">
    <property type="term" value="C:plasma membrane"/>
    <property type="evidence" value="ECO:0007669"/>
    <property type="project" value="UniProtKB-SubCell"/>
</dbReference>
<dbReference type="GO" id="GO:0051287">
    <property type="term" value="F:NAD binding"/>
    <property type="evidence" value="ECO:0007669"/>
    <property type="project" value="InterPro"/>
</dbReference>
<dbReference type="GO" id="GO:0050136">
    <property type="term" value="F:NADH:ubiquinone reductase (non-electrogenic) activity"/>
    <property type="evidence" value="ECO:0007669"/>
    <property type="project" value="UniProtKB-UniRule"/>
</dbReference>
<dbReference type="GO" id="GO:0048038">
    <property type="term" value="F:quinone binding"/>
    <property type="evidence" value="ECO:0007669"/>
    <property type="project" value="UniProtKB-KW"/>
</dbReference>
<dbReference type="FunFam" id="1.10.645.10:FF:000005">
    <property type="entry name" value="NADH-quinone oxidoreductase subunit D"/>
    <property type="match status" value="1"/>
</dbReference>
<dbReference type="Gene3D" id="1.10.645.10">
    <property type="entry name" value="Cytochrome-c3 Hydrogenase, chain B"/>
    <property type="match status" value="1"/>
</dbReference>
<dbReference type="HAMAP" id="MF_01358">
    <property type="entry name" value="NDH1_NuoD"/>
    <property type="match status" value="1"/>
</dbReference>
<dbReference type="InterPro" id="IPR001135">
    <property type="entry name" value="NADH_Q_OxRdtase_suD"/>
</dbReference>
<dbReference type="InterPro" id="IPR014029">
    <property type="entry name" value="NADH_UbQ_OxRdtase_49kDa_CS"/>
</dbReference>
<dbReference type="InterPro" id="IPR022885">
    <property type="entry name" value="NDH1_su_D/H"/>
</dbReference>
<dbReference type="InterPro" id="IPR029014">
    <property type="entry name" value="NiFe-Hase_large"/>
</dbReference>
<dbReference type="NCBIfam" id="TIGR01962">
    <property type="entry name" value="NuoD"/>
    <property type="match status" value="1"/>
</dbReference>
<dbReference type="NCBIfam" id="NF004739">
    <property type="entry name" value="PRK06075.1"/>
    <property type="match status" value="1"/>
</dbReference>
<dbReference type="PANTHER" id="PTHR11993:SF10">
    <property type="entry name" value="NADH DEHYDROGENASE [UBIQUINONE] IRON-SULFUR PROTEIN 2, MITOCHONDRIAL"/>
    <property type="match status" value="1"/>
</dbReference>
<dbReference type="PANTHER" id="PTHR11993">
    <property type="entry name" value="NADH-UBIQUINONE OXIDOREDUCTASE 49 KDA SUBUNIT"/>
    <property type="match status" value="1"/>
</dbReference>
<dbReference type="Pfam" id="PF00346">
    <property type="entry name" value="Complex1_49kDa"/>
    <property type="match status" value="1"/>
</dbReference>
<dbReference type="SUPFAM" id="SSF56762">
    <property type="entry name" value="HydB/Nqo4-like"/>
    <property type="match status" value="1"/>
</dbReference>
<dbReference type="PROSITE" id="PS00535">
    <property type="entry name" value="COMPLEX1_49K"/>
    <property type="match status" value="1"/>
</dbReference>
<keyword id="KW-0997">Cell inner membrane</keyword>
<keyword id="KW-1003">Cell membrane</keyword>
<keyword id="KW-0472">Membrane</keyword>
<keyword id="KW-0520">NAD</keyword>
<keyword id="KW-0874">Quinone</keyword>
<keyword id="KW-1185">Reference proteome</keyword>
<keyword id="KW-1278">Translocase</keyword>
<keyword id="KW-0813">Transport</keyword>
<keyword id="KW-0830">Ubiquinone</keyword>
<comment type="function">
    <text evidence="1">NDH-1 shuttles electrons from NADH, via FMN and iron-sulfur (Fe-S) centers, to quinones in the respiratory chain. The immediate electron acceptor for the enzyme in this species is believed to be ubiquinone. Couples the redox reaction to proton translocation (for every two electrons transferred, four hydrogen ions are translocated across the cytoplasmic membrane), and thus conserves the redox energy in a proton gradient.</text>
</comment>
<comment type="catalytic activity">
    <reaction evidence="1">
        <text>a quinone + NADH + 5 H(+)(in) = a quinol + NAD(+) + 4 H(+)(out)</text>
        <dbReference type="Rhea" id="RHEA:57888"/>
        <dbReference type="ChEBI" id="CHEBI:15378"/>
        <dbReference type="ChEBI" id="CHEBI:24646"/>
        <dbReference type="ChEBI" id="CHEBI:57540"/>
        <dbReference type="ChEBI" id="CHEBI:57945"/>
        <dbReference type="ChEBI" id="CHEBI:132124"/>
    </reaction>
</comment>
<comment type="subunit">
    <text evidence="1">NDH-1 is composed of 14 different subunits. Subunits NuoB, C, D, E, F, and G constitute the peripheral sector of the complex.</text>
</comment>
<comment type="subcellular location">
    <subcellularLocation>
        <location evidence="1">Cell inner membrane</location>
        <topology evidence="1">Peripheral membrane protein</topology>
        <orientation evidence="1">Cytoplasmic side</orientation>
    </subcellularLocation>
</comment>
<comment type="similarity">
    <text evidence="1">Belongs to the complex I 49 kDa subunit family.</text>
</comment>
<reference key="1">
    <citation type="submission" date="2006-01" db="EMBL/GenBank/DDBJ databases">
        <title>Complete sequence of Rhodopseudomonas palustris HaA2.</title>
        <authorList>
            <consortium name="US DOE Joint Genome Institute"/>
            <person name="Copeland A."/>
            <person name="Lucas S."/>
            <person name="Lapidus A."/>
            <person name="Barry K."/>
            <person name="Detter J.C."/>
            <person name="Glavina T."/>
            <person name="Hammon N."/>
            <person name="Israni S."/>
            <person name="Pitluck S."/>
            <person name="Chain P."/>
            <person name="Malfatti S."/>
            <person name="Shin M."/>
            <person name="Vergez L."/>
            <person name="Schmutz J."/>
            <person name="Larimer F."/>
            <person name="Land M."/>
            <person name="Hauser L."/>
            <person name="Pelletier D.A."/>
            <person name="Kyrpides N."/>
            <person name="Anderson I."/>
            <person name="Oda Y."/>
            <person name="Harwood C.S."/>
            <person name="Richardson P."/>
        </authorList>
    </citation>
    <scope>NUCLEOTIDE SEQUENCE [LARGE SCALE GENOMIC DNA]</scope>
    <source>
        <strain>HaA2</strain>
    </source>
</reference>